<dbReference type="EC" id="2.7.11.5" evidence="1"/>
<dbReference type="EC" id="3.1.3.-" evidence="1"/>
<dbReference type="EMBL" id="AJ310671">
    <property type="protein sequence ID" value="CAC80133.1"/>
    <property type="molecule type" value="Genomic_DNA"/>
</dbReference>
<dbReference type="EMBL" id="AM260479">
    <property type="protein sequence ID" value="CAJ91320.1"/>
    <property type="molecule type" value="Genomic_DNA"/>
</dbReference>
<dbReference type="RefSeq" id="WP_011614381.1">
    <property type="nucleotide sequence ID" value="NC_008313.1"/>
</dbReference>
<dbReference type="SMR" id="Q8KLU8"/>
<dbReference type="STRING" id="381666.H16_A0168"/>
<dbReference type="KEGG" id="reh:H16_A0168"/>
<dbReference type="PATRIC" id="fig|381666.6.peg.522"/>
<dbReference type="eggNOG" id="COG4579">
    <property type="taxonomic scope" value="Bacteria"/>
</dbReference>
<dbReference type="HOGENOM" id="CLU_033804_1_1_4"/>
<dbReference type="OrthoDB" id="5287793at2"/>
<dbReference type="Proteomes" id="UP000008210">
    <property type="component" value="Chromosome 1"/>
</dbReference>
<dbReference type="GO" id="GO:0005737">
    <property type="term" value="C:cytoplasm"/>
    <property type="evidence" value="ECO:0007669"/>
    <property type="project" value="UniProtKB-SubCell"/>
</dbReference>
<dbReference type="GO" id="GO:0008772">
    <property type="term" value="F:[isocitrate dehydrogenase (NADP+)] kinase activity"/>
    <property type="evidence" value="ECO:0007669"/>
    <property type="project" value="UniProtKB-UniRule"/>
</dbReference>
<dbReference type="GO" id="GO:0016208">
    <property type="term" value="F:AMP binding"/>
    <property type="evidence" value="ECO:0007669"/>
    <property type="project" value="TreeGrafter"/>
</dbReference>
<dbReference type="GO" id="GO:0005524">
    <property type="term" value="F:ATP binding"/>
    <property type="evidence" value="ECO:0007669"/>
    <property type="project" value="UniProtKB-UniRule"/>
</dbReference>
<dbReference type="GO" id="GO:0004721">
    <property type="term" value="F:phosphoprotein phosphatase activity"/>
    <property type="evidence" value="ECO:0007669"/>
    <property type="project" value="UniProtKB-KW"/>
</dbReference>
<dbReference type="GO" id="GO:0004674">
    <property type="term" value="F:protein serine/threonine kinase activity"/>
    <property type="evidence" value="ECO:0007669"/>
    <property type="project" value="UniProtKB-KW"/>
</dbReference>
<dbReference type="GO" id="GO:0006006">
    <property type="term" value="P:glucose metabolic process"/>
    <property type="evidence" value="ECO:0007669"/>
    <property type="project" value="InterPro"/>
</dbReference>
<dbReference type="GO" id="GO:0006097">
    <property type="term" value="P:glyoxylate cycle"/>
    <property type="evidence" value="ECO:0007669"/>
    <property type="project" value="UniProtKB-UniRule"/>
</dbReference>
<dbReference type="GO" id="GO:0006099">
    <property type="term" value="P:tricarboxylic acid cycle"/>
    <property type="evidence" value="ECO:0007669"/>
    <property type="project" value="UniProtKB-UniRule"/>
</dbReference>
<dbReference type="HAMAP" id="MF_00747">
    <property type="entry name" value="AceK"/>
    <property type="match status" value="1"/>
</dbReference>
<dbReference type="InterPro" id="IPR046855">
    <property type="entry name" value="AceK_kinase"/>
</dbReference>
<dbReference type="InterPro" id="IPR046854">
    <property type="entry name" value="AceK_regulatory"/>
</dbReference>
<dbReference type="InterPro" id="IPR010452">
    <property type="entry name" value="Isocitrate_DH_AceK"/>
</dbReference>
<dbReference type="NCBIfam" id="NF002804">
    <property type="entry name" value="PRK02946.1"/>
    <property type="match status" value="1"/>
</dbReference>
<dbReference type="PANTHER" id="PTHR39559">
    <property type="match status" value="1"/>
</dbReference>
<dbReference type="PANTHER" id="PTHR39559:SF1">
    <property type="entry name" value="ISOCITRATE DEHYDROGENASE KINASE_PHOSPHATASE"/>
    <property type="match status" value="1"/>
</dbReference>
<dbReference type="Pfam" id="PF06315">
    <property type="entry name" value="AceK_kinase"/>
    <property type="match status" value="1"/>
</dbReference>
<dbReference type="Pfam" id="PF20423">
    <property type="entry name" value="AceK_regulatory"/>
    <property type="match status" value="1"/>
</dbReference>
<dbReference type="PIRSF" id="PIRSF000719">
    <property type="entry name" value="AceK"/>
    <property type="match status" value="1"/>
</dbReference>
<organism>
    <name type="scientific">Cupriavidus necator (strain ATCC 17699 / DSM 428 / KCTC 22496 / NCIMB 10442 / H16 / Stanier 337)</name>
    <name type="common">Ralstonia eutropha</name>
    <dbReference type="NCBI Taxonomy" id="381666"/>
    <lineage>
        <taxon>Bacteria</taxon>
        <taxon>Pseudomonadati</taxon>
        <taxon>Pseudomonadota</taxon>
        <taxon>Betaproteobacteria</taxon>
        <taxon>Burkholderiales</taxon>
        <taxon>Burkholderiaceae</taxon>
        <taxon>Cupriavidus</taxon>
    </lineage>
</organism>
<keyword id="KW-0067">ATP-binding</keyword>
<keyword id="KW-0963">Cytoplasm</keyword>
<keyword id="KW-0329">Glyoxylate bypass</keyword>
<keyword id="KW-0378">Hydrolase</keyword>
<keyword id="KW-0418">Kinase</keyword>
<keyword id="KW-0547">Nucleotide-binding</keyword>
<keyword id="KW-0904">Protein phosphatase</keyword>
<keyword id="KW-1185">Reference proteome</keyword>
<keyword id="KW-0723">Serine/threonine-protein kinase</keyword>
<keyword id="KW-0808">Transferase</keyword>
<keyword id="KW-0816">Tricarboxylic acid cycle</keyword>
<proteinExistence type="inferred from homology"/>
<gene>
    <name evidence="1" type="primary">aceK</name>
    <name type="ordered locus">H16_A0168</name>
</gene>
<evidence type="ECO:0000255" key="1">
    <source>
        <dbReference type="HAMAP-Rule" id="MF_00747"/>
    </source>
</evidence>
<evidence type="ECO:0000305" key="2"/>
<feature type="chain" id="PRO_0000057905" description="Isocitrate dehydrogenase kinase/phosphatase">
    <location>
        <begin position="1"/>
        <end position="613"/>
    </location>
</feature>
<feature type="active site" evidence="1">
    <location>
        <position position="384"/>
    </location>
</feature>
<feature type="binding site" evidence="1">
    <location>
        <begin position="328"/>
        <end position="334"/>
    </location>
    <ligand>
        <name>ATP</name>
        <dbReference type="ChEBI" id="CHEBI:30616"/>
    </ligand>
</feature>
<feature type="binding site" evidence="1">
    <location>
        <position position="349"/>
    </location>
    <ligand>
        <name>ATP</name>
        <dbReference type="ChEBI" id="CHEBI:30616"/>
    </ligand>
</feature>
<feature type="sequence conflict" description="In Ref. 1; CAC80133." evidence="2" ref="1">
    <original>E</original>
    <variation>K</variation>
    <location>
        <position position="275"/>
    </location>
</feature>
<reference key="1">
    <citation type="journal article" date="2002" name="J. Bacteriol.">
        <title>Carbonic anhydrase is essential for growth of Ralstonia eutropha at ambient CO2 concentrations.</title>
        <authorList>
            <person name="Kusian B."/>
            <person name="Sultemeyer D."/>
            <person name="Bowien B."/>
        </authorList>
    </citation>
    <scope>NUCLEOTIDE SEQUENCE [GENOMIC DNA]</scope>
</reference>
<reference key="2">
    <citation type="journal article" date="2006" name="Nat. Biotechnol.">
        <title>Genome sequence of the bioplastic-producing 'Knallgas' bacterium Ralstonia eutropha H16.</title>
        <authorList>
            <person name="Pohlmann A."/>
            <person name="Fricke W.F."/>
            <person name="Reinecke F."/>
            <person name="Kusian B."/>
            <person name="Liesegang H."/>
            <person name="Cramm R."/>
            <person name="Eitinger T."/>
            <person name="Ewering C."/>
            <person name="Poetter M."/>
            <person name="Schwartz E."/>
            <person name="Strittmatter A."/>
            <person name="Voss I."/>
            <person name="Gottschalk G."/>
            <person name="Steinbuechel A."/>
            <person name="Friedrich B."/>
            <person name="Bowien B."/>
        </authorList>
    </citation>
    <scope>NUCLEOTIDE SEQUENCE [LARGE SCALE GENOMIC DNA]</scope>
    <source>
        <strain>ATCC 17699 / DSM 428 / KCTC 22496 / NCIMB 10442 / H16 / Stanier 337</strain>
    </source>
</reference>
<name>ACEK_CUPNH</name>
<sequence length="613" mass="71480">MSHFPKLLSSQIAFDVARTMLDGFDKHYRLFREVSHQAKLKFEAGDWHGLQQIQRDRIAFYNERVRESSVILEDEYDAENIEDEIWQQIKLHYIGLLTNHHQPELAETFFNSVCTRILHRSYFNNDFIFVRPAISTEYIENEESPTRPTFRAYYPGSREGMAACFERVVHNFQLESPFEDLQRDIGYVVRAVSEHFGDLRIAPNFQVHTLSSLFFRNKSAFIIGRILNGDRTFPLAIPIVHGPSGKLTLDTVLLKKEQLLILFSFTHSYFMVDMEIPSAYVTFLRDIMPRKPRAEIYTSLGLQKQGKNLFYRDFLHHLQHSSDKFIVAPGIRGLVMLVFTLPSYPYVFKVIKDFFPAPKETTRELVKSKYQLVKQHDRVGRMADTLEYSDVAFPLSRFDEALVREFEQHAPSMIEYQRGKDGGEEIVVRHVYIERRMTPLNIYLTEGTDEQVEHGVIEYGNAVKELIAANIFPGDMLYKNFGVTRHGRVVFYDYDEIEYLTDCNIRDVPQPRNEEEEMSGEVWYTVRPHDIFPETFRTFLLGDTRVRAAFLRHHADFFDPAMWQSHKDRLLAGHVHDFFAYHSSERFIHRYSEAGSAQGTAAVPDPGPARRVA</sequence>
<comment type="function">
    <text evidence="1">Bifunctional enzyme which can phosphorylate or dephosphorylate isocitrate dehydrogenase (IDH) on a specific serine residue. This is a regulatory mechanism which enables bacteria to bypass the Krebs cycle via the glyoxylate shunt in response to the source of carbon. When bacteria are grown on glucose, IDH is fully active and unphosphorylated, but when grown on acetate or ethanol, the activity of IDH declines drastically concomitant with its phosphorylation.</text>
</comment>
<comment type="catalytic activity">
    <reaction evidence="1">
        <text>L-seryl-[isocitrate dehydrogenase] + ATP = O-phospho-L-seryl-[isocitrate dehydrogenase] + ADP + H(+)</text>
        <dbReference type="Rhea" id="RHEA:43540"/>
        <dbReference type="Rhea" id="RHEA-COMP:10605"/>
        <dbReference type="Rhea" id="RHEA-COMP:10606"/>
        <dbReference type="ChEBI" id="CHEBI:15378"/>
        <dbReference type="ChEBI" id="CHEBI:29999"/>
        <dbReference type="ChEBI" id="CHEBI:30616"/>
        <dbReference type="ChEBI" id="CHEBI:83421"/>
        <dbReference type="ChEBI" id="CHEBI:456216"/>
        <dbReference type="EC" id="2.7.11.5"/>
    </reaction>
</comment>
<comment type="subcellular location">
    <subcellularLocation>
        <location evidence="1">Cytoplasm</location>
    </subcellularLocation>
</comment>
<comment type="similarity">
    <text evidence="1">Belongs to the AceK family.</text>
</comment>
<accession>Q8KLU8</accession>
<accession>Q0KFA1</accession>
<protein>
    <recommendedName>
        <fullName evidence="1">Isocitrate dehydrogenase kinase/phosphatase</fullName>
        <shortName evidence="1">IDH kinase/phosphatase</shortName>
        <shortName evidence="1">IDHK/P</shortName>
        <ecNumber evidence="1">2.7.11.5</ecNumber>
        <ecNumber evidence="1">3.1.3.-</ecNumber>
    </recommendedName>
</protein>